<keyword id="KW-0131">Cell cycle</keyword>
<keyword id="KW-0132">Cell division</keyword>
<keyword id="KW-0997">Cell inner membrane</keyword>
<keyword id="KW-1003">Cell membrane</keyword>
<keyword id="KW-0133">Cell shape</keyword>
<keyword id="KW-0961">Cell wall biogenesis/degradation</keyword>
<keyword id="KW-0328">Glycosyltransferase</keyword>
<keyword id="KW-0472">Membrane</keyword>
<keyword id="KW-0573">Peptidoglycan synthesis</keyword>
<keyword id="KW-1185">Reference proteome</keyword>
<keyword id="KW-0808">Transferase</keyword>
<dbReference type="EC" id="2.4.1.227" evidence="1"/>
<dbReference type="EMBL" id="AE017126">
    <property type="protein sequence ID" value="AAP99269.1"/>
    <property type="molecule type" value="Genomic_DNA"/>
</dbReference>
<dbReference type="RefSeq" id="NP_874617.1">
    <property type="nucleotide sequence ID" value="NC_005042.1"/>
</dbReference>
<dbReference type="RefSeq" id="WP_011124378.1">
    <property type="nucleotide sequence ID" value="NC_005042.1"/>
</dbReference>
<dbReference type="SMR" id="Q7VDZ2"/>
<dbReference type="STRING" id="167539.Pro_0223"/>
<dbReference type="CAZy" id="GT28">
    <property type="family name" value="Glycosyltransferase Family 28"/>
</dbReference>
<dbReference type="EnsemblBacteria" id="AAP99269">
    <property type="protein sequence ID" value="AAP99269"/>
    <property type="gene ID" value="Pro_0223"/>
</dbReference>
<dbReference type="KEGG" id="pma:Pro_0223"/>
<dbReference type="PATRIC" id="fig|167539.5.peg.230"/>
<dbReference type="eggNOG" id="COG0707">
    <property type="taxonomic scope" value="Bacteria"/>
</dbReference>
<dbReference type="HOGENOM" id="CLU_037404_2_1_3"/>
<dbReference type="OrthoDB" id="9808936at2"/>
<dbReference type="UniPathway" id="UPA00219"/>
<dbReference type="Proteomes" id="UP000001420">
    <property type="component" value="Chromosome"/>
</dbReference>
<dbReference type="GO" id="GO:0005886">
    <property type="term" value="C:plasma membrane"/>
    <property type="evidence" value="ECO:0007669"/>
    <property type="project" value="UniProtKB-SubCell"/>
</dbReference>
<dbReference type="GO" id="GO:0051991">
    <property type="term" value="F:UDP-N-acetyl-D-glucosamine:N-acetylmuramoyl-L-alanyl-D-glutamyl-meso-2,6-diaminopimelyl-D-alanyl-D-alanine-diphosphoundecaprenol 4-beta-N-acetylglucosaminlytransferase activity"/>
    <property type="evidence" value="ECO:0007669"/>
    <property type="project" value="RHEA"/>
</dbReference>
<dbReference type="GO" id="GO:0050511">
    <property type="term" value="F:undecaprenyldiphospho-muramoylpentapeptide beta-N-acetylglucosaminyltransferase activity"/>
    <property type="evidence" value="ECO:0007669"/>
    <property type="project" value="UniProtKB-UniRule"/>
</dbReference>
<dbReference type="GO" id="GO:0005975">
    <property type="term" value="P:carbohydrate metabolic process"/>
    <property type="evidence" value="ECO:0007669"/>
    <property type="project" value="InterPro"/>
</dbReference>
<dbReference type="GO" id="GO:0051301">
    <property type="term" value="P:cell division"/>
    <property type="evidence" value="ECO:0007669"/>
    <property type="project" value="UniProtKB-KW"/>
</dbReference>
<dbReference type="GO" id="GO:0071555">
    <property type="term" value="P:cell wall organization"/>
    <property type="evidence" value="ECO:0007669"/>
    <property type="project" value="UniProtKB-KW"/>
</dbReference>
<dbReference type="GO" id="GO:0030259">
    <property type="term" value="P:lipid glycosylation"/>
    <property type="evidence" value="ECO:0007669"/>
    <property type="project" value="UniProtKB-UniRule"/>
</dbReference>
<dbReference type="GO" id="GO:0009252">
    <property type="term" value="P:peptidoglycan biosynthetic process"/>
    <property type="evidence" value="ECO:0007669"/>
    <property type="project" value="UniProtKB-UniRule"/>
</dbReference>
<dbReference type="GO" id="GO:0008360">
    <property type="term" value="P:regulation of cell shape"/>
    <property type="evidence" value="ECO:0007669"/>
    <property type="project" value="UniProtKB-KW"/>
</dbReference>
<dbReference type="CDD" id="cd03785">
    <property type="entry name" value="GT28_MurG"/>
    <property type="match status" value="1"/>
</dbReference>
<dbReference type="Gene3D" id="3.40.50.2000">
    <property type="entry name" value="Glycogen Phosphorylase B"/>
    <property type="match status" value="2"/>
</dbReference>
<dbReference type="HAMAP" id="MF_00033">
    <property type="entry name" value="MurG"/>
    <property type="match status" value="1"/>
</dbReference>
<dbReference type="InterPro" id="IPR006009">
    <property type="entry name" value="GlcNAc_MurG"/>
</dbReference>
<dbReference type="InterPro" id="IPR007235">
    <property type="entry name" value="Glyco_trans_28_C"/>
</dbReference>
<dbReference type="InterPro" id="IPR004276">
    <property type="entry name" value="GlycoTrans_28_N"/>
</dbReference>
<dbReference type="NCBIfam" id="TIGR01133">
    <property type="entry name" value="murG"/>
    <property type="match status" value="1"/>
</dbReference>
<dbReference type="PANTHER" id="PTHR21015:SF22">
    <property type="entry name" value="GLYCOSYLTRANSFERASE"/>
    <property type="match status" value="1"/>
</dbReference>
<dbReference type="PANTHER" id="PTHR21015">
    <property type="entry name" value="UDP-N-ACETYLGLUCOSAMINE--N-ACETYLMURAMYL-(PENTAPEPTIDE) PYROPHOSPHORYL-UNDECAPRENOL N-ACETYLGLUCOSAMINE TRANSFERASE 1"/>
    <property type="match status" value="1"/>
</dbReference>
<dbReference type="Pfam" id="PF04101">
    <property type="entry name" value="Glyco_tran_28_C"/>
    <property type="match status" value="1"/>
</dbReference>
<dbReference type="Pfam" id="PF03033">
    <property type="entry name" value="Glyco_transf_28"/>
    <property type="match status" value="1"/>
</dbReference>
<dbReference type="SUPFAM" id="SSF53756">
    <property type="entry name" value="UDP-Glycosyltransferase/glycogen phosphorylase"/>
    <property type="match status" value="1"/>
</dbReference>
<proteinExistence type="inferred from homology"/>
<comment type="function">
    <text evidence="1">Cell wall formation. Catalyzes the transfer of a GlcNAc subunit on undecaprenyl-pyrophosphoryl-MurNAc-pentapeptide (lipid intermediate I) to form undecaprenyl-pyrophosphoryl-MurNAc-(pentapeptide)GlcNAc (lipid intermediate II).</text>
</comment>
<comment type="catalytic activity">
    <reaction evidence="1">
        <text>di-trans,octa-cis-undecaprenyl diphospho-N-acetyl-alpha-D-muramoyl-L-alanyl-D-glutamyl-meso-2,6-diaminopimeloyl-D-alanyl-D-alanine + UDP-N-acetyl-alpha-D-glucosamine = di-trans,octa-cis-undecaprenyl diphospho-[N-acetyl-alpha-D-glucosaminyl-(1-&gt;4)]-N-acetyl-alpha-D-muramoyl-L-alanyl-D-glutamyl-meso-2,6-diaminopimeloyl-D-alanyl-D-alanine + UDP + H(+)</text>
        <dbReference type="Rhea" id="RHEA:31227"/>
        <dbReference type="ChEBI" id="CHEBI:15378"/>
        <dbReference type="ChEBI" id="CHEBI:57705"/>
        <dbReference type="ChEBI" id="CHEBI:58223"/>
        <dbReference type="ChEBI" id="CHEBI:61387"/>
        <dbReference type="ChEBI" id="CHEBI:61388"/>
        <dbReference type="EC" id="2.4.1.227"/>
    </reaction>
</comment>
<comment type="pathway">
    <text evidence="1">Cell wall biogenesis; peptidoglycan biosynthesis.</text>
</comment>
<comment type="subcellular location">
    <subcellularLocation>
        <location evidence="1">Cell inner membrane</location>
        <topology evidence="1">Peripheral membrane protein</topology>
        <orientation evidence="1">Cytoplasmic side</orientation>
    </subcellularLocation>
</comment>
<comment type="similarity">
    <text evidence="1">Belongs to the glycosyltransferase 28 family. MurG subfamily.</text>
</comment>
<organism>
    <name type="scientific">Prochlorococcus marinus (strain SARG / CCMP1375 / SS120)</name>
    <dbReference type="NCBI Taxonomy" id="167539"/>
    <lineage>
        <taxon>Bacteria</taxon>
        <taxon>Bacillati</taxon>
        <taxon>Cyanobacteriota</taxon>
        <taxon>Cyanophyceae</taxon>
        <taxon>Synechococcales</taxon>
        <taxon>Prochlorococcaceae</taxon>
        <taxon>Prochlorococcus</taxon>
    </lineage>
</organism>
<protein>
    <recommendedName>
        <fullName evidence="1">UDP-N-acetylglucosamine--N-acetylmuramyl-(pentapeptide) pyrophosphoryl-undecaprenol N-acetylglucosamine transferase</fullName>
        <ecNumber evidence="1">2.4.1.227</ecNumber>
    </recommendedName>
    <alternativeName>
        <fullName evidence="1">Undecaprenyl-PP-MurNAc-pentapeptide-UDPGlcNAc GlcNAc transferase</fullName>
    </alternativeName>
</protein>
<gene>
    <name evidence="1" type="primary">murG</name>
    <name type="ordered locus">Pro_0223</name>
</gene>
<evidence type="ECO:0000255" key="1">
    <source>
        <dbReference type="HAMAP-Rule" id="MF_00033"/>
    </source>
</evidence>
<name>MURG_PROMA</name>
<feature type="chain" id="PRO_0000225076" description="UDP-N-acetylglucosamine--N-acetylmuramyl-(pentapeptide) pyrophosphoryl-undecaprenol N-acetylglucosamine transferase">
    <location>
        <begin position="1"/>
        <end position="357"/>
    </location>
</feature>
<feature type="binding site" evidence="1">
    <location>
        <begin position="11"/>
        <end position="13"/>
    </location>
    <ligand>
        <name>UDP-N-acetyl-alpha-D-glucosamine</name>
        <dbReference type="ChEBI" id="CHEBI:57705"/>
    </ligand>
</feature>
<feature type="binding site" evidence="1">
    <location>
        <position position="120"/>
    </location>
    <ligand>
        <name>UDP-N-acetyl-alpha-D-glucosamine</name>
        <dbReference type="ChEBI" id="CHEBI:57705"/>
    </ligand>
</feature>
<feature type="binding site" evidence="1">
    <location>
        <position position="161"/>
    </location>
    <ligand>
        <name>UDP-N-acetyl-alpha-D-glucosamine</name>
        <dbReference type="ChEBI" id="CHEBI:57705"/>
    </ligand>
</feature>
<feature type="binding site" evidence="1">
    <location>
        <position position="188"/>
    </location>
    <ligand>
        <name>UDP-N-acetyl-alpha-D-glucosamine</name>
        <dbReference type="ChEBI" id="CHEBI:57705"/>
    </ligand>
</feature>
<feature type="binding site" evidence="1">
    <location>
        <position position="281"/>
    </location>
    <ligand>
        <name>UDP-N-acetyl-alpha-D-glucosamine</name>
        <dbReference type="ChEBI" id="CHEBI:57705"/>
    </ligand>
</feature>
<accession>Q7VDZ2</accession>
<sequence>MPRLLIAASGTGGHIFPALSVAEELPESWDISWLGVPERLENQLVPTKYDMTVIPVGGLQSKGLRKYFQLLKLILAIFFVIYLIKRKQIKLVFTTGGYIAAPAIIASKLCGINVILHESNSYPGKVTRLLGKFCDEVALGLPIAAEKLKRCRTIVTGMPVRKSFSLKNPLPIWVPKGLEPLIVVMGGSQGAVGLNRMVRESLPWLLKQGYRVVHITGKYDKPSNINHKNFVEKSFTEEIPGLLQHADLAISRAGAGALSEFAICSLPVILVPYPYSSDHHQDANAAYAAQFGAALIVHEDRLGTHVLTRALENLLATNRMSSKYKSDDLLNKMRIGMTKLAIKDANQRLISILQRYV</sequence>
<reference key="1">
    <citation type="journal article" date="2003" name="Proc. Natl. Acad. Sci. U.S.A.">
        <title>Genome sequence of the cyanobacterium Prochlorococcus marinus SS120, a nearly minimal oxyphototrophic genome.</title>
        <authorList>
            <person name="Dufresne A."/>
            <person name="Salanoubat M."/>
            <person name="Partensky F."/>
            <person name="Artiguenave F."/>
            <person name="Axmann I.M."/>
            <person name="Barbe V."/>
            <person name="Duprat S."/>
            <person name="Galperin M.Y."/>
            <person name="Koonin E.V."/>
            <person name="Le Gall F."/>
            <person name="Makarova K.S."/>
            <person name="Ostrowski M."/>
            <person name="Oztas S."/>
            <person name="Robert C."/>
            <person name="Rogozin I.B."/>
            <person name="Scanlan D.J."/>
            <person name="Tandeau de Marsac N."/>
            <person name="Weissenbach J."/>
            <person name="Wincker P."/>
            <person name="Wolf Y.I."/>
            <person name="Hess W.R."/>
        </authorList>
    </citation>
    <scope>NUCLEOTIDE SEQUENCE [LARGE SCALE GENOMIC DNA]</scope>
    <source>
        <strain>SARG / CCMP1375 / SS120</strain>
    </source>
</reference>